<protein>
    <recommendedName>
        <fullName evidence="1">Phospho-N-acetylmuramoyl-pentapeptide-transferase</fullName>
        <ecNumber evidence="1">2.7.8.13</ecNumber>
    </recommendedName>
    <alternativeName>
        <fullName evidence="1">UDP-MurNAc-pentapeptide phosphotransferase</fullName>
    </alternativeName>
</protein>
<dbReference type="EC" id="2.7.8.13" evidence="1"/>
<dbReference type="EMBL" id="AP009384">
    <property type="protein sequence ID" value="BAF90539.1"/>
    <property type="molecule type" value="Genomic_DNA"/>
</dbReference>
<dbReference type="RefSeq" id="WP_012173060.1">
    <property type="nucleotide sequence ID" value="NC_009937.1"/>
</dbReference>
<dbReference type="SMR" id="A8HZ57"/>
<dbReference type="STRING" id="438753.AZC_4541"/>
<dbReference type="KEGG" id="azc:AZC_4541"/>
<dbReference type="eggNOG" id="COG0472">
    <property type="taxonomic scope" value="Bacteria"/>
</dbReference>
<dbReference type="HOGENOM" id="CLU_023982_0_0_5"/>
<dbReference type="UniPathway" id="UPA00219"/>
<dbReference type="Proteomes" id="UP000000270">
    <property type="component" value="Chromosome"/>
</dbReference>
<dbReference type="GO" id="GO:0005886">
    <property type="term" value="C:plasma membrane"/>
    <property type="evidence" value="ECO:0007669"/>
    <property type="project" value="UniProtKB-SubCell"/>
</dbReference>
<dbReference type="GO" id="GO:0046872">
    <property type="term" value="F:metal ion binding"/>
    <property type="evidence" value="ECO:0007669"/>
    <property type="project" value="UniProtKB-KW"/>
</dbReference>
<dbReference type="GO" id="GO:0008963">
    <property type="term" value="F:phospho-N-acetylmuramoyl-pentapeptide-transferase activity"/>
    <property type="evidence" value="ECO:0007669"/>
    <property type="project" value="UniProtKB-UniRule"/>
</dbReference>
<dbReference type="GO" id="GO:0051992">
    <property type="term" value="F:UDP-N-acetylmuramoyl-L-alanyl-D-glutamyl-meso-2,6-diaminopimelyl-D-alanyl-D-alanine:undecaprenyl-phosphate transferase activity"/>
    <property type="evidence" value="ECO:0007669"/>
    <property type="project" value="RHEA"/>
</dbReference>
<dbReference type="GO" id="GO:0051301">
    <property type="term" value="P:cell division"/>
    <property type="evidence" value="ECO:0007669"/>
    <property type="project" value="UniProtKB-KW"/>
</dbReference>
<dbReference type="GO" id="GO:0071555">
    <property type="term" value="P:cell wall organization"/>
    <property type="evidence" value="ECO:0007669"/>
    <property type="project" value="UniProtKB-KW"/>
</dbReference>
<dbReference type="GO" id="GO:0009252">
    <property type="term" value="P:peptidoglycan biosynthetic process"/>
    <property type="evidence" value="ECO:0007669"/>
    <property type="project" value="UniProtKB-UniRule"/>
</dbReference>
<dbReference type="GO" id="GO:0008360">
    <property type="term" value="P:regulation of cell shape"/>
    <property type="evidence" value="ECO:0007669"/>
    <property type="project" value="UniProtKB-KW"/>
</dbReference>
<dbReference type="CDD" id="cd06852">
    <property type="entry name" value="GT_MraY"/>
    <property type="match status" value="1"/>
</dbReference>
<dbReference type="HAMAP" id="MF_00038">
    <property type="entry name" value="MraY"/>
    <property type="match status" value="1"/>
</dbReference>
<dbReference type="InterPro" id="IPR000715">
    <property type="entry name" value="Glycosyl_transferase_4"/>
</dbReference>
<dbReference type="InterPro" id="IPR003524">
    <property type="entry name" value="PNAcMuramoyl-5peptid_Trfase"/>
</dbReference>
<dbReference type="InterPro" id="IPR018480">
    <property type="entry name" value="PNAcMuramoyl-5peptid_Trfase_CS"/>
</dbReference>
<dbReference type="NCBIfam" id="TIGR00445">
    <property type="entry name" value="mraY"/>
    <property type="match status" value="1"/>
</dbReference>
<dbReference type="PANTHER" id="PTHR22926">
    <property type="entry name" value="PHOSPHO-N-ACETYLMURAMOYL-PENTAPEPTIDE-TRANSFERASE"/>
    <property type="match status" value="1"/>
</dbReference>
<dbReference type="PANTHER" id="PTHR22926:SF5">
    <property type="entry name" value="PHOSPHO-N-ACETYLMURAMOYL-PENTAPEPTIDE-TRANSFERASE HOMOLOG"/>
    <property type="match status" value="1"/>
</dbReference>
<dbReference type="Pfam" id="PF00953">
    <property type="entry name" value="Glycos_transf_4"/>
    <property type="match status" value="1"/>
</dbReference>
<dbReference type="Pfam" id="PF10555">
    <property type="entry name" value="MraY_sig1"/>
    <property type="match status" value="1"/>
</dbReference>
<dbReference type="PROSITE" id="PS01347">
    <property type="entry name" value="MRAY_1"/>
    <property type="match status" value="1"/>
</dbReference>
<dbReference type="PROSITE" id="PS01348">
    <property type="entry name" value="MRAY_2"/>
    <property type="match status" value="1"/>
</dbReference>
<organism>
    <name type="scientific">Azorhizobium caulinodans (strain ATCC 43989 / DSM 5975 / JCM 20966 / LMG 6465 / NBRC 14845 / NCIMB 13405 / ORS 571)</name>
    <dbReference type="NCBI Taxonomy" id="438753"/>
    <lineage>
        <taxon>Bacteria</taxon>
        <taxon>Pseudomonadati</taxon>
        <taxon>Pseudomonadota</taxon>
        <taxon>Alphaproteobacteria</taxon>
        <taxon>Hyphomicrobiales</taxon>
        <taxon>Xanthobacteraceae</taxon>
        <taxon>Azorhizobium</taxon>
    </lineage>
</organism>
<accession>A8HZ57</accession>
<comment type="function">
    <text evidence="1">Catalyzes the initial step of the lipid cycle reactions in the biosynthesis of the cell wall peptidoglycan: transfers peptidoglycan precursor phospho-MurNAc-pentapeptide from UDP-MurNAc-pentapeptide onto the lipid carrier undecaprenyl phosphate, yielding undecaprenyl-pyrophosphoryl-MurNAc-pentapeptide, known as lipid I.</text>
</comment>
<comment type="catalytic activity">
    <reaction evidence="1">
        <text>UDP-N-acetyl-alpha-D-muramoyl-L-alanyl-gamma-D-glutamyl-meso-2,6-diaminopimeloyl-D-alanyl-D-alanine + di-trans,octa-cis-undecaprenyl phosphate = di-trans,octa-cis-undecaprenyl diphospho-N-acetyl-alpha-D-muramoyl-L-alanyl-D-glutamyl-meso-2,6-diaminopimeloyl-D-alanyl-D-alanine + UMP</text>
        <dbReference type="Rhea" id="RHEA:28386"/>
        <dbReference type="ChEBI" id="CHEBI:57865"/>
        <dbReference type="ChEBI" id="CHEBI:60392"/>
        <dbReference type="ChEBI" id="CHEBI:61386"/>
        <dbReference type="ChEBI" id="CHEBI:61387"/>
        <dbReference type="EC" id="2.7.8.13"/>
    </reaction>
</comment>
<comment type="cofactor">
    <cofactor evidence="1">
        <name>Mg(2+)</name>
        <dbReference type="ChEBI" id="CHEBI:18420"/>
    </cofactor>
</comment>
<comment type="pathway">
    <text evidence="1">Cell wall biogenesis; peptidoglycan biosynthesis.</text>
</comment>
<comment type="subcellular location">
    <subcellularLocation>
        <location evidence="1">Cell inner membrane</location>
        <topology evidence="1">Multi-pass membrane protein</topology>
    </subcellularLocation>
</comment>
<comment type="similarity">
    <text evidence="1">Belongs to the glycosyltransferase 4 family. MraY subfamily.</text>
</comment>
<reference key="1">
    <citation type="submission" date="2007-04" db="EMBL/GenBank/DDBJ databases">
        <title>Complete genome sequence of the nitrogen-fixing bacterium Azorhizobium caulinodans ORS571.</title>
        <authorList>
            <person name="Lee K.B."/>
            <person name="Backer P.D."/>
            <person name="Aono T."/>
            <person name="Liu C.T."/>
            <person name="Suzuki S."/>
            <person name="Suzuki T."/>
            <person name="Kaneko T."/>
            <person name="Yamada M."/>
            <person name="Tabata S."/>
            <person name="Kupfer D.M."/>
            <person name="Najar F.Z."/>
            <person name="Wiley G.B."/>
            <person name="Roe B."/>
            <person name="Binnewies T."/>
            <person name="Ussery D."/>
            <person name="Vereecke D."/>
            <person name="Gevers D."/>
            <person name="Holsters M."/>
            <person name="Oyaizu H."/>
        </authorList>
    </citation>
    <scope>NUCLEOTIDE SEQUENCE [LARGE SCALE GENOMIC DNA]</scope>
    <source>
        <strain>ATCC 43989 / DSM 5975 / JCM 20966 / LMG 6465 / NBRC 14845 / NCIMB 13405 / ORS 571</strain>
    </source>
</reference>
<sequence>MLQWLAQLHDTFPAFNVFRYITFRTGGAIVTAVLFVFLFGPGIISTLRLKQGKGQPIRADGPQSHLLTKKGTPTMGGLMIFSGLIVATLLWANLSNLYVWVVLFVTTGFGLIGFYDDYLKVTRQSHAGFSGKARLAIEALIAGIAVVLMINAGRAGLSSSVAFPFFKDLLLDLGWFFVVFGAFVIVAAGNAVNLTDGLDGLAIVPVMIAAASFGMISYLSGNVVFADYLQIHYVAGVGELAVICGAIIGAGLGFLWFNAPPAQIFMGDTGSLALGGLLGSIAVATKHEIVLAVIGGLFVLEAVSVIVQVISFRLTGKRVFRMAPIHHHFEQLGWTESQVVIRFWIIAVVLALLGLATLKLR</sequence>
<keyword id="KW-0131">Cell cycle</keyword>
<keyword id="KW-0132">Cell division</keyword>
<keyword id="KW-0997">Cell inner membrane</keyword>
<keyword id="KW-1003">Cell membrane</keyword>
<keyword id="KW-0133">Cell shape</keyword>
<keyword id="KW-0961">Cell wall biogenesis/degradation</keyword>
<keyword id="KW-0460">Magnesium</keyword>
<keyword id="KW-0472">Membrane</keyword>
<keyword id="KW-0479">Metal-binding</keyword>
<keyword id="KW-0573">Peptidoglycan synthesis</keyword>
<keyword id="KW-1185">Reference proteome</keyword>
<keyword id="KW-0808">Transferase</keyword>
<keyword id="KW-0812">Transmembrane</keyword>
<keyword id="KW-1133">Transmembrane helix</keyword>
<proteinExistence type="inferred from homology"/>
<feature type="chain" id="PRO_1000071045" description="Phospho-N-acetylmuramoyl-pentapeptide-transferase">
    <location>
        <begin position="1"/>
        <end position="361"/>
    </location>
</feature>
<feature type="transmembrane region" description="Helical" evidence="1">
    <location>
        <begin position="27"/>
        <end position="47"/>
    </location>
</feature>
<feature type="transmembrane region" description="Helical" evidence="1">
    <location>
        <begin position="72"/>
        <end position="92"/>
    </location>
</feature>
<feature type="transmembrane region" description="Helical" evidence="1">
    <location>
        <begin position="94"/>
        <end position="114"/>
    </location>
</feature>
<feature type="transmembrane region" description="Helical" evidence="1">
    <location>
        <begin position="133"/>
        <end position="153"/>
    </location>
</feature>
<feature type="transmembrane region" description="Helical" evidence="1">
    <location>
        <begin position="169"/>
        <end position="189"/>
    </location>
</feature>
<feature type="transmembrane region" description="Helical" evidence="1">
    <location>
        <begin position="200"/>
        <end position="220"/>
    </location>
</feature>
<feature type="transmembrane region" description="Helical" evidence="1">
    <location>
        <begin position="237"/>
        <end position="257"/>
    </location>
</feature>
<feature type="transmembrane region" description="Helical" evidence="1">
    <location>
        <begin position="264"/>
        <end position="284"/>
    </location>
</feature>
<feature type="transmembrane region" description="Helical" evidence="1">
    <location>
        <begin position="289"/>
        <end position="309"/>
    </location>
</feature>
<feature type="transmembrane region" description="Helical" evidence="1">
    <location>
        <begin position="338"/>
        <end position="358"/>
    </location>
</feature>
<evidence type="ECO:0000255" key="1">
    <source>
        <dbReference type="HAMAP-Rule" id="MF_00038"/>
    </source>
</evidence>
<gene>
    <name evidence="1" type="primary">mraY</name>
    <name type="ordered locus">AZC_4541</name>
</gene>
<name>MRAY_AZOC5</name>